<reference key="1">
    <citation type="submission" date="2006-06" db="EMBL/GenBank/DDBJ databases">
        <authorList>
            <consortium name="NIH - Mammalian Gene Collection (MGC) project"/>
        </authorList>
    </citation>
    <scope>NUCLEOTIDE SEQUENCE [LARGE SCALE MRNA]</scope>
    <source>
        <strain>Hereford</strain>
        <tissue>Fetal brain</tissue>
    </source>
</reference>
<sequence>MKLCVTVLSLLVLMAAFCSPALSAPMGSDPPTACCFSYTLRKIPRNFVNDYFETSSLCSQPAVVFQTKKGRQVCANPSEPWVQEYVDDLELN</sequence>
<protein>
    <recommendedName>
        <fullName>C-C motif chemokine 4</fullName>
    </recommendedName>
    <alternativeName>
        <fullName>Small-inducible cytokine A4</fullName>
    </alternativeName>
</protein>
<accession>Q17QA1</accession>
<evidence type="ECO:0000250" key="1"/>
<evidence type="ECO:0000305" key="2"/>
<comment type="function">
    <text evidence="1">Monokine with inflammatory and chemokinetic properties.</text>
</comment>
<comment type="subunit">
    <text evidence="1">Homodimer. Interacts with CCR5 (By similarity).</text>
</comment>
<comment type="subcellular location">
    <subcellularLocation>
        <location evidence="1">Secreted</location>
    </subcellularLocation>
</comment>
<comment type="similarity">
    <text evidence="2">Belongs to the intercrine beta (chemokine CC) family.</text>
</comment>
<keyword id="KW-0145">Chemotaxis</keyword>
<keyword id="KW-0202">Cytokine</keyword>
<keyword id="KW-1015">Disulfide bond</keyword>
<keyword id="KW-0395">Inflammatory response</keyword>
<keyword id="KW-1185">Reference proteome</keyword>
<keyword id="KW-0964">Secreted</keyword>
<keyword id="KW-0732">Signal</keyword>
<name>CCL4_BOVIN</name>
<gene>
    <name type="primary">CCL4</name>
    <name type="synonym">SCY4A</name>
</gene>
<proteinExistence type="inferred from homology"/>
<organism>
    <name type="scientific">Bos taurus</name>
    <name type="common">Bovine</name>
    <dbReference type="NCBI Taxonomy" id="9913"/>
    <lineage>
        <taxon>Eukaryota</taxon>
        <taxon>Metazoa</taxon>
        <taxon>Chordata</taxon>
        <taxon>Craniata</taxon>
        <taxon>Vertebrata</taxon>
        <taxon>Euteleostomi</taxon>
        <taxon>Mammalia</taxon>
        <taxon>Eutheria</taxon>
        <taxon>Laurasiatheria</taxon>
        <taxon>Artiodactyla</taxon>
        <taxon>Ruminantia</taxon>
        <taxon>Pecora</taxon>
        <taxon>Bovidae</taxon>
        <taxon>Bovinae</taxon>
        <taxon>Bos</taxon>
    </lineage>
</organism>
<dbReference type="EMBL" id="BC118471">
    <property type="protein sequence ID" value="AAI18472.1"/>
    <property type="molecule type" value="mRNA"/>
</dbReference>
<dbReference type="RefSeq" id="NP_001068615.1">
    <property type="nucleotide sequence ID" value="NM_001075147.2"/>
</dbReference>
<dbReference type="SMR" id="Q17QA1"/>
<dbReference type="FunCoup" id="Q17QA1">
    <property type="interactions" value="419"/>
</dbReference>
<dbReference type="STRING" id="9913.ENSBTAP00000009446"/>
<dbReference type="PaxDb" id="9913-ENSBTAP00000009446"/>
<dbReference type="Ensembl" id="ENSBTAT00000009446.5">
    <property type="protein sequence ID" value="ENSBTAP00000009446.4"/>
    <property type="gene ID" value="ENSBTAG00000025257.5"/>
</dbReference>
<dbReference type="GeneID" id="414347"/>
<dbReference type="KEGG" id="bta:414347"/>
<dbReference type="CTD" id="6351"/>
<dbReference type="VEuPathDB" id="HostDB:ENSBTAG00000025257"/>
<dbReference type="eggNOG" id="ENOG502S8M4">
    <property type="taxonomic scope" value="Eukaryota"/>
</dbReference>
<dbReference type="GeneTree" id="ENSGT01100000263482"/>
<dbReference type="HOGENOM" id="CLU_141716_4_0_1"/>
<dbReference type="InParanoid" id="Q17QA1"/>
<dbReference type="OMA" id="IRTSQRC"/>
<dbReference type="OrthoDB" id="9447832at2759"/>
<dbReference type="TreeFam" id="TF334888"/>
<dbReference type="Reactome" id="R-BTA-380108">
    <property type="pathway name" value="Chemokine receptors bind chemokines"/>
</dbReference>
<dbReference type="Reactome" id="R-BTA-418594">
    <property type="pathway name" value="G alpha (i) signalling events"/>
</dbReference>
<dbReference type="Proteomes" id="UP000009136">
    <property type="component" value="Chromosome 19"/>
</dbReference>
<dbReference type="Bgee" id="ENSBTAG00000025257">
    <property type="expression patterns" value="Expressed in milk and 96 other cell types or tissues"/>
</dbReference>
<dbReference type="GO" id="GO:0005615">
    <property type="term" value="C:extracellular space"/>
    <property type="evidence" value="ECO:0000318"/>
    <property type="project" value="GO_Central"/>
</dbReference>
<dbReference type="GO" id="GO:0048020">
    <property type="term" value="F:CCR chemokine receptor binding"/>
    <property type="evidence" value="ECO:0000318"/>
    <property type="project" value="GO_Central"/>
</dbReference>
<dbReference type="GO" id="GO:0008009">
    <property type="term" value="F:chemokine activity"/>
    <property type="evidence" value="ECO:0000318"/>
    <property type="project" value="GO_Central"/>
</dbReference>
<dbReference type="GO" id="GO:0061844">
    <property type="term" value="P:antimicrobial humoral immune response mediated by antimicrobial peptide"/>
    <property type="evidence" value="ECO:0000318"/>
    <property type="project" value="GO_Central"/>
</dbReference>
<dbReference type="GO" id="GO:0071466">
    <property type="term" value="P:cellular response to xenobiotic stimulus"/>
    <property type="evidence" value="ECO:0007669"/>
    <property type="project" value="Ensembl"/>
</dbReference>
<dbReference type="GO" id="GO:0070098">
    <property type="term" value="P:chemokine-mediated signaling pathway"/>
    <property type="evidence" value="ECO:0000318"/>
    <property type="project" value="GO_Central"/>
</dbReference>
<dbReference type="GO" id="GO:0048245">
    <property type="term" value="P:eosinophil chemotaxis"/>
    <property type="evidence" value="ECO:0000318"/>
    <property type="project" value="GO_Central"/>
</dbReference>
<dbReference type="GO" id="GO:0006954">
    <property type="term" value="P:inflammatory response"/>
    <property type="evidence" value="ECO:0000318"/>
    <property type="project" value="GO_Central"/>
</dbReference>
<dbReference type="GO" id="GO:0030335">
    <property type="term" value="P:positive regulation of cell migration"/>
    <property type="evidence" value="ECO:0000318"/>
    <property type="project" value="GO_Central"/>
</dbReference>
<dbReference type="CDD" id="cd00272">
    <property type="entry name" value="Chemokine_CC"/>
    <property type="match status" value="1"/>
</dbReference>
<dbReference type="FunFam" id="2.40.50.40:FF:000002">
    <property type="entry name" value="C-C motif chemokine"/>
    <property type="match status" value="1"/>
</dbReference>
<dbReference type="Gene3D" id="2.40.50.40">
    <property type="match status" value="1"/>
</dbReference>
<dbReference type="InterPro" id="IPR039809">
    <property type="entry name" value="Chemokine_b/g/d"/>
</dbReference>
<dbReference type="InterPro" id="IPR000827">
    <property type="entry name" value="Chemokine_CC_CS"/>
</dbReference>
<dbReference type="InterPro" id="IPR001811">
    <property type="entry name" value="Chemokine_IL8-like_dom"/>
</dbReference>
<dbReference type="InterPro" id="IPR036048">
    <property type="entry name" value="Interleukin_8-like_sf"/>
</dbReference>
<dbReference type="PANTHER" id="PTHR12015:SF103">
    <property type="entry name" value="C-C MOTIF CHEMOKINE 4-RELATED"/>
    <property type="match status" value="1"/>
</dbReference>
<dbReference type="PANTHER" id="PTHR12015">
    <property type="entry name" value="SMALL INDUCIBLE CYTOKINE A"/>
    <property type="match status" value="1"/>
</dbReference>
<dbReference type="Pfam" id="PF00048">
    <property type="entry name" value="IL8"/>
    <property type="match status" value="1"/>
</dbReference>
<dbReference type="SMART" id="SM00199">
    <property type="entry name" value="SCY"/>
    <property type="match status" value="1"/>
</dbReference>
<dbReference type="SUPFAM" id="SSF54117">
    <property type="entry name" value="Interleukin 8-like chemokines"/>
    <property type="match status" value="1"/>
</dbReference>
<dbReference type="PROSITE" id="PS00472">
    <property type="entry name" value="SMALL_CYTOKINES_CC"/>
    <property type="match status" value="1"/>
</dbReference>
<feature type="signal peptide" evidence="1">
    <location>
        <begin position="1"/>
        <end position="23"/>
    </location>
</feature>
<feature type="chain" id="PRO_0000326235" description="C-C motif chemokine 4">
    <location>
        <begin position="24"/>
        <end position="92"/>
    </location>
</feature>
<feature type="disulfide bond" evidence="1">
    <location>
        <begin position="34"/>
        <end position="58"/>
    </location>
</feature>
<feature type="disulfide bond" evidence="1">
    <location>
        <begin position="35"/>
        <end position="74"/>
    </location>
</feature>